<name>IKBL1_MACMU</name>
<accession>Q5TM19</accession>
<dbReference type="EMBL" id="AB128049">
    <property type="protein sequence ID" value="BAD69726.1"/>
    <property type="molecule type" value="Genomic_DNA"/>
</dbReference>
<dbReference type="RefSeq" id="NP_001040609.1">
    <property type="nucleotide sequence ID" value="NM_001047144.1"/>
</dbReference>
<dbReference type="SMR" id="Q5TM19"/>
<dbReference type="FunCoup" id="Q5TM19">
    <property type="interactions" value="1546"/>
</dbReference>
<dbReference type="STRING" id="9544.ENSMMUP00000071785"/>
<dbReference type="PaxDb" id="9544-ENSMMUP00000011586"/>
<dbReference type="GeneID" id="715283"/>
<dbReference type="KEGG" id="mcc:715283"/>
<dbReference type="CTD" id="4795"/>
<dbReference type="eggNOG" id="ENOG502QTMZ">
    <property type="taxonomic scope" value="Eukaryota"/>
</dbReference>
<dbReference type="HOGENOM" id="CLU_054217_0_0_1"/>
<dbReference type="InParanoid" id="Q5TM19"/>
<dbReference type="OrthoDB" id="412109at2759"/>
<dbReference type="TreeFam" id="TF333242"/>
<dbReference type="Proteomes" id="UP000006718">
    <property type="component" value="Unassembled WGS sequence"/>
</dbReference>
<dbReference type="GO" id="GO:0005634">
    <property type="term" value="C:nucleus"/>
    <property type="evidence" value="ECO:0000250"/>
    <property type="project" value="UniProtKB"/>
</dbReference>
<dbReference type="GO" id="GO:0071222">
    <property type="term" value="P:cellular response to lipopolysaccharide"/>
    <property type="evidence" value="ECO:0000250"/>
    <property type="project" value="UniProtKB"/>
</dbReference>
<dbReference type="GO" id="GO:0043124">
    <property type="term" value="P:negative regulation of canonical NF-kappaB signal transduction"/>
    <property type="evidence" value="ECO:0007669"/>
    <property type="project" value="InterPro"/>
</dbReference>
<dbReference type="GO" id="GO:0031665">
    <property type="term" value="P:negative regulation of lipopolysaccharide-mediated signaling pathway"/>
    <property type="evidence" value="ECO:0000250"/>
    <property type="project" value="UniProtKB"/>
</dbReference>
<dbReference type="GO" id="GO:0032088">
    <property type="term" value="P:negative regulation of NF-kappaB transcription factor activity"/>
    <property type="evidence" value="ECO:0000250"/>
    <property type="project" value="UniProtKB"/>
</dbReference>
<dbReference type="GO" id="GO:0034122">
    <property type="term" value="P:negative regulation of toll-like receptor signaling pathway"/>
    <property type="evidence" value="ECO:0000250"/>
    <property type="project" value="UniProtKB"/>
</dbReference>
<dbReference type="GO" id="GO:0032720">
    <property type="term" value="P:negative regulation of tumor necrosis factor production"/>
    <property type="evidence" value="ECO:0000250"/>
    <property type="project" value="UniProtKB"/>
</dbReference>
<dbReference type="FunFam" id="1.25.40.20:FF:000145">
    <property type="entry name" value="NF-kappa-B inhibitor-like protein 1 isoform X1"/>
    <property type="match status" value="1"/>
</dbReference>
<dbReference type="Gene3D" id="1.25.40.20">
    <property type="entry name" value="Ankyrin repeat-containing domain"/>
    <property type="match status" value="1"/>
</dbReference>
<dbReference type="InterPro" id="IPR036770">
    <property type="entry name" value="Ankyrin_rpt-contain_sf"/>
</dbReference>
<dbReference type="InterPro" id="IPR038753">
    <property type="entry name" value="NFKBIL1"/>
</dbReference>
<dbReference type="PANTHER" id="PTHR15263">
    <property type="entry name" value="I-KAPPA-B-LIKE PROTEIN IKBL"/>
    <property type="match status" value="1"/>
</dbReference>
<dbReference type="PANTHER" id="PTHR15263:SF1">
    <property type="entry name" value="NF-KAPPA-B INHIBITOR-LIKE PROTEIN 1"/>
    <property type="match status" value="1"/>
</dbReference>
<dbReference type="SUPFAM" id="SSF48403">
    <property type="entry name" value="Ankyrin repeat"/>
    <property type="match status" value="1"/>
</dbReference>
<dbReference type="PROSITE" id="PS50297">
    <property type="entry name" value="ANK_REP_REGION"/>
    <property type="match status" value="1"/>
</dbReference>
<keyword id="KW-0040">ANK repeat</keyword>
<keyword id="KW-0539">Nucleus</keyword>
<keyword id="KW-0597">Phosphoprotein</keyword>
<keyword id="KW-1185">Reference proteome</keyword>
<keyword id="KW-0677">Repeat</keyword>
<evidence type="ECO:0000250" key="1"/>
<evidence type="ECO:0000250" key="2">
    <source>
        <dbReference type="UniProtKB" id="Q9UBC1"/>
    </source>
</evidence>
<evidence type="ECO:0000256" key="3">
    <source>
        <dbReference type="SAM" id="MobiDB-lite"/>
    </source>
</evidence>
<comment type="function">
    <text evidence="1">Involved in the regulation of innate immune response. Acts as negative regulator of Toll-like receptor and interferon-regulatory factor (IRF) signaling pathways. Contributes to the negative regulation of transcriptional activation of NF-kappa-B target genes in response to endogenous pro-inflammatory stimuli (By similarity).</text>
</comment>
<comment type="subunit">
    <text evidence="1">Interacts with CACTIN (via N-terminal domain); the interaction occurs in a pro-inflammatory-independent manner.</text>
</comment>
<comment type="subcellular location">
    <subcellularLocation>
        <location evidence="1">Nucleus</location>
    </subcellularLocation>
    <text evidence="1">Nuclear localization with a speckled expression pattern in some cells. Colocalizes with CACTIN in the nucleus (By similarity).</text>
</comment>
<reference key="1">
    <citation type="journal article" date="2004" name="Mol. Biol. Evol.">
        <title>Rhesus macaque class I duplicon structures, organization, and evolution within the alpha block of the major histocompatibility complex.</title>
        <authorList>
            <person name="Kulski J.K."/>
            <person name="Anzai T."/>
            <person name="Shiina T."/>
            <person name="Inoko H."/>
        </authorList>
    </citation>
    <scope>NUCLEOTIDE SEQUENCE [LARGE SCALE GENOMIC DNA]</scope>
</reference>
<gene>
    <name type="primary">NFKBIL1</name>
</gene>
<organism>
    <name type="scientific">Macaca mulatta</name>
    <name type="common">Rhesus macaque</name>
    <dbReference type="NCBI Taxonomy" id="9544"/>
    <lineage>
        <taxon>Eukaryota</taxon>
        <taxon>Metazoa</taxon>
        <taxon>Chordata</taxon>
        <taxon>Craniata</taxon>
        <taxon>Vertebrata</taxon>
        <taxon>Euteleostomi</taxon>
        <taxon>Mammalia</taxon>
        <taxon>Eutheria</taxon>
        <taxon>Euarchontoglires</taxon>
        <taxon>Primates</taxon>
        <taxon>Haplorrhini</taxon>
        <taxon>Catarrhini</taxon>
        <taxon>Cercopithecidae</taxon>
        <taxon>Cercopithecinae</taxon>
        <taxon>Macaca</taxon>
    </lineage>
</organism>
<protein>
    <recommendedName>
        <fullName>NF-kappa-B inhibitor-like protein 1</fullName>
    </recommendedName>
    <alternativeName>
        <fullName>Inhibitor of kappa B-like protein</fullName>
        <shortName>I-kappa-B-like protein</shortName>
        <shortName>IkappaBL</shortName>
    </alternativeName>
    <alternativeName>
        <fullName>Nuclear factor of kappa light polypeptide gene enhancer in B-cells inhibitor-like 1</fullName>
    </alternativeName>
</protein>
<feature type="chain" id="PRO_0000067010" description="NF-kappa-B inhibitor-like protein 1">
    <location>
        <begin position="1"/>
        <end position="381"/>
    </location>
</feature>
<feature type="repeat" description="ANK 1">
    <location>
        <begin position="64"/>
        <end position="93"/>
    </location>
</feature>
<feature type="repeat" description="ANK 2">
    <location>
        <begin position="97"/>
        <end position="133"/>
    </location>
</feature>
<feature type="region of interest" description="Disordered" evidence="3">
    <location>
        <begin position="1"/>
        <end position="34"/>
    </location>
</feature>
<feature type="region of interest" description="Disordered" evidence="3">
    <location>
        <begin position="131"/>
        <end position="167"/>
    </location>
</feature>
<feature type="region of interest" description="Disordered" evidence="3">
    <location>
        <begin position="186"/>
        <end position="242"/>
    </location>
</feature>
<feature type="region of interest" description="Disordered" evidence="3">
    <location>
        <begin position="256"/>
        <end position="294"/>
    </location>
</feature>
<feature type="compositionally biased region" description="Acidic residues" evidence="3">
    <location>
        <begin position="150"/>
        <end position="159"/>
    </location>
</feature>
<feature type="compositionally biased region" description="Basic and acidic residues" evidence="3">
    <location>
        <begin position="256"/>
        <end position="287"/>
    </location>
</feature>
<feature type="modified residue" description="Phosphoserine" evidence="2">
    <location>
        <position position="150"/>
    </location>
</feature>
<proteinExistence type="inferred from homology"/>
<sequence length="381" mass="43144">MSNPSPQVPEEEASTSVCRPKSSMASTSRRQRRERRFRRYLSAGRLVRAQALLQRHPGLDVDAGQPPPLHRACARHDAPALCLLLRLGADPAHQDRHGDTALHAAARQGPDAYTDFFLPLLSRCPSAMGIKNKDGETPGQILGWGPPWDSAEEEEEDDASKEREWRQKLQGELEDEWQEVMGRFEGDASHETQEPESFSAWSDRLAREHAQKCQQQQREAEGSCRPPRAEGSSQSWRQQEEEQRLFRERARVKEEELRESRARRAQEALGDREPKPARAGPRAEHPRGAGRGSLWRFGDVPWPCPGGGDPEAMAAALVARGPPLEEQGALRRYLRVQQVRWHPDRFLQRFRSQIETWELGRVMGAVTALSQALNRHAEALK</sequence>